<feature type="signal peptide" evidence="1">
    <location>
        <begin position="1"/>
        <end position="18"/>
    </location>
</feature>
<feature type="chain" id="PRO_5003011501" description="RxLR effector protein PITG_02860">
    <location>
        <begin position="19"/>
        <end position="135"/>
    </location>
</feature>
<feature type="region of interest" description="NRL1-binding domain" evidence="7">
    <location>
        <begin position="126"/>
        <end position="135"/>
    </location>
</feature>
<feature type="short sequence motif" description="RxLR-dEER" evidence="6">
    <location>
        <begin position="48"/>
        <end position="64"/>
    </location>
</feature>
<feature type="mutagenesis site" description="Impairs the interaction with host NRL1 and blocks the ability to enhance the association of NRL1 with SWAP70." evidence="3">
    <location>
        <begin position="126"/>
        <end position="135"/>
    </location>
</feature>
<reference key="1">
    <citation type="journal article" date="2009" name="Nature">
        <title>Genome sequence and analysis of the Irish potato famine pathogen Phytophthora infestans.</title>
        <authorList>
            <consortium name="The Broad Institute Genome Sequencing Platform"/>
            <person name="Haas B.J."/>
            <person name="Kamoun S."/>
            <person name="Zody M.C."/>
            <person name="Jiang R.H."/>
            <person name="Handsaker R.E."/>
            <person name="Cano L.M."/>
            <person name="Grabherr M."/>
            <person name="Kodira C.D."/>
            <person name="Raffaele S."/>
            <person name="Torto-Alalibo T."/>
            <person name="Bozkurt T.O."/>
            <person name="Ah-Fong A.M."/>
            <person name="Alvarado L."/>
            <person name="Anderson V.L."/>
            <person name="Armstrong M.R."/>
            <person name="Avrova A."/>
            <person name="Baxter L."/>
            <person name="Beynon J."/>
            <person name="Boevink P.C."/>
            <person name="Bollmann S.R."/>
            <person name="Bos J.I."/>
            <person name="Bulone V."/>
            <person name="Cai G."/>
            <person name="Cakir C."/>
            <person name="Carrington J.C."/>
            <person name="Chawner M."/>
            <person name="Conti L."/>
            <person name="Costanzo S."/>
            <person name="Ewan R."/>
            <person name="Fahlgren N."/>
            <person name="Fischbach M.A."/>
            <person name="Fugelstad J."/>
            <person name="Gilroy E.M."/>
            <person name="Gnerre S."/>
            <person name="Green P.J."/>
            <person name="Grenville-Briggs L.J."/>
            <person name="Griffith J."/>
            <person name="Grunwald N.J."/>
            <person name="Horn K."/>
            <person name="Horner N.R."/>
            <person name="Hu C.H."/>
            <person name="Huitema E."/>
            <person name="Jeong D.H."/>
            <person name="Jones A.M."/>
            <person name="Jones J.D."/>
            <person name="Jones R.W."/>
            <person name="Karlsson E.K."/>
            <person name="Kunjeti S.G."/>
            <person name="Lamour K."/>
            <person name="Liu Z."/>
            <person name="Ma L."/>
            <person name="Maclean D."/>
            <person name="Chibucos M.C."/>
            <person name="McDonald H."/>
            <person name="McWalters J."/>
            <person name="Meijer H.J."/>
            <person name="Morgan W."/>
            <person name="Morris P.F."/>
            <person name="Munro C.A."/>
            <person name="O'Neill K."/>
            <person name="Ospina-Giraldo M."/>
            <person name="Pinzon A."/>
            <person name="Pritchard L."/>
            <person name="Ramsahoye B."/>
            <person name="Ren Q."/>
            <person name="Restrepo S."/>
            <person name="Roy S."/>
            <person name="Sadanandom A."/>
            <person name="Savidor A."/>
            <person name="Schornack S."/>
            <person name="Schwartz D.C."/>
            <person name="Schumann U.D."/>
            <person name="Schwessinger B."/>
            <person name="Seyer L."/>
            <person name="Sharpe T."/>
            <person name="Silvar C."/>
            <person name="Song J."/>
            <person name="Studholme D.J."/>
            <person name="Sykes S."/>
            <person name="Thines M."/>
            <person name="van de Vondervoort P.J."/>
            <person name="Phuntumart V."/>
            <person name="Wawra S."/>
            <person name="Weide R."/>
            <person name="Win J."/>
            <person name="Young C."/>
            <person name="Zhou S."/>
            <person name="Fry W."/>
            <person name="Meyers B.C."/>
            <person name="van West P."/>
            <person name="Ristaino J."/>
            <person name="Govers F."/>
            <person name="Birch P.R."/>
            <person name="Whisson S.C."/>
            <person name="Judelson H.S."/>
            <person name="Nusbaum C."/>
        </authorList>
    </citation>
    <scope>NUCLEOTIDE SEQUENCE [LARGE SCALE GENOMIC DNA]</scope>
    <source>
        <strain>T30-4</strain>
    </source>
</reference>
<reference key="2">
    <citation type="journal article" date="2016" name="Plant Physiol.">
        <title>Potato NPH3/RPT2-Like Protein StNRL1, Targeted by a Phytophthora infestans RXLR Effector, Is a Susceptibility Factor.</title>
        <authorList>
            <person name="Yang L."/>
            <person name="McLellan H."/>
            <person name="Naqvi S."/>
            <person name="He Q."/>
            <person name="Boevink P.C."/>
            <person name="Armstrong M."/>
            <person name="Giuliani L.M."/>
            <person name="Zhang W."/>
            <person name="Tian Z."/>
            <person name="Zhan J."/>
            <person name="Gilroy E.M."/>
            <person name="Birch P.R."/>
        </authorList>
    </citation>
    <scope>FUNCTION</scope>
    <scope>SUBCELLULAR LOCATION</scope>
    <scope>INTERACTION WITH HOST NRL1</scope>
</reference>
<reference key="3">
    <citation type="journal article" date="2018" name="Proc. Natl. Acad. Sci. U.S.A.">
        <title>Plant pathogen effector utilizes host susceptibility factor NRL1 to degrade the immune regulator SWAP70.</title>
        <authorList>
            <person name="He Q."/>
            <person name="Naqvi S."/>
            <person name="McLellan H."/>
            <person name="Boevink P.C."/>
            <person name="Champouret N."/>
            <person name="Hein I."/>
            <person name="Birch P.R.J."/>
        </authorList>
    </citation>
    <scope>FUNCTION</scope>
    <scope>INTERACTION WITH HOST NRL1</scope>
    <scope>DOMAIN</scope>
    <scope>MUTAGENESIS OF 126-LEU--PRO-135</scope>
</reference>
<accession>D0MXE4</accession>
<protein>
    <recommendedName>
        <fullName evidence="4">RxLR effector protein PITG_02860</fullName>
    </recommendedName>
</protein>
<sequence>MRLAFLLLAVSHFICGNALPTNVKSSPVVSPGLIQSFDNAQKPVVMSRKLLRTDERLSEANEERTKLSELFRLDDDEVAAIKELSSMFSAFLQKKSQAFDVYDEIFRSGYPIDTAARISNLYTKYLKDPQAFRGP</sequence>
<gene>
    <name type="ORF">PITG_02860</name>
</gene>
<dbReference type="EMBL" id="DS028120">
    <property type="protein sequence ID" value="EEY64307.1"/>
    <property type="molecule type" value="Genomic_DNA"/>
</dbReference>
<dbReference type="RefSeq" id="XP_002907743.1">
    <property type="nucleotide sequence ID" value="XM_002907697.1"/>
</dbReference>
<dbReference type="SMR" id="D0MXE4"/>
<dbReference type="EnsemblProtists" id="PITG_02860T0">
    <property type="protein sequence ID" value="PITG_02860T0"/>
    <property type="gene ID" value="PITG_02860"/>
</dbReference>
<dbReference type="GeneID" id="9476955"/>
<dbReference type="KEGG" id="pif:PITG_02860"/>
<dbReference type="VEuPathDB" id="FungiDB:PITG_02860"/>
<dbReference type="HOGENOM" id="CLU_160339_0_0_1"/>
<dbReference type="InParanoid" id="D0MXE4"/>
<dbReference type="Proteomes" id="UP000006643">
    <property type="component" value="Partially assembled WGS sequence"/>
</dbReference>
<dbReference type="GO" id="GO:0005576">
    <property type="term" value="C:extracellular region"/>
    <property type="evidence" value="ECO:0007669"/>
    <property type="project" value="UniProtKB-SubCell"/>
</dbReference>
<dbReference type="GO" id="GO:0030430">
    <property type="term" value="C:host cell cytoplasm"/>
    <property type="evidence" value="ECO:0007669"/>
    <property type="project" value="UniProtKB-SubCell"/>
</dbReference>
<dbReference type="GO" id="GO:0044095">
    <property type="term" value="C:host cell nucleoplasm"/>
    <property type="evidence" value="ECO:0007669"/>
    <property type="project" value="UniProtKB-SubCell"/>
</dbReference>
<dbReference type="GO" id="GO:0044082">
    <property type="term" value="P:symbiont-mediated perturbation of host small GTPase-mediated signal transduction"/>
    <property type="evidence" value="ECO:0000269"/>
    <property type="project" value="SigSci"/>
</dbReference>
<name>RXLRC_PHYIT</name>
<organism>
    <name type="scientific">Phytophthora infestans (strain T30-4)</name>
    <name type="common">Potato late blight agent</name>
    <dbReference type="NCBI Taxonomy" id="403677"/>
    <lineage>
        <taxon>Eukaryota</taxon>
        <taxon>Sar</taxon>
        <taxon>Stramenopiles</taxon>
        <taxon>Oomycota</taxon>
        <taxon>Peronosporales</taxon>
        <taxon>Peronosporaceae</taxon>
        <taxon>Phytophthora</taxon>
    </lineage>
</organism>
<evidence type="ECO:0000255" key="1"/>
<evidence type="ECO:0000269" key="2">
    <source>
    </source>
</evidence>
<evidence type="ECO:0000269" key="3">
    <source>
    </source>
</evidence>
<evidence type="ECO:0000303" key="4">
    <source>
    </source>
</evidence>
<evidence type="ECO:0000305" key="5"/>
<evidence type="ECO:0000305" key="6">
    <source>
    </source>
</evidence>
<evidence type="ECO:0000305" key="7">
    <source>
    </source>
</evidence>
<proteinExistence type="evidence at protein level"/>
<keyword id="KW-1035">Host cytoplasm</keyword>
<keyword id="KW-1048">Host nucleus</keyword>
<keyword id="KW-1185">Reference proteome</keyword>
<keyword id="KW-0964">Secreted</keyword>
<keyword id="KW-0732">Signal</keyword>
<keyword id="KW-0843">Virulence</keyword>
<comment type="function">
    <text evidence="2 3">Effector that promotes P.infestans virulence and suppresses pattern-triggered immunity (PTI) (PubMed:26966171, PubMed:30049706). Interacts with the host ubiquitin E3 ligase NRL1 and enhances the association between NRL1 and SWAP70 to promote proteasome-mediated degradation of SWAP70, which results in the suppression of immunity (PubMed:26966171, PubMed:30049706).</text>
</comment>
<comment type="subunit">
    <text evidence="3">Interacts with host ubiquitin E3 ligase NRL1.</text>
</comment>
<comment type="subcellular location">
    <subcellularLocation>
        <location evidence="2">Secreted</location>
    </subcellularLocation>
    <subcellularLocation>
        <location evidence="2">Host cytoplasm</location>
    </subcellularLocation>
    <subcellularLocation>
        <location evidence="2">Host nucleus</location>
        <location evidence="2">Host nucleoplasm</location>
    </subcellularLocation>
    <text evidence="2">The cytoplasmic localization is more important for its contribution to virulence than the nucleoplasmic localization.</text>
</comment>
<comment type="domain">
    <text evidence="6">The RxLR-dEER motif acts to carry the protein into the host cell cytoplasm through binding to cell surface phosphatidylinositol-3-phosphate.</text>
</comment>
<comment type="domain">
    <text evidence="3">The C-terminus (residues 126 to 135) is required for the interaction with host NRL1 and the ability to enhance the association of NRL1 with SWAP70.</text>
</comment>
<comment type="similarity">
    <text evidence="5">Belongs to the RxLR effector family.</text>
</comment>